<reference key="1">
    <citation type="journal article" date="1993" name="Mol. Gen. Genet.">
        <title>Characterization of the Staphylococcus aureus chromosomal gene pcrA, identified by mutations affecting plasmid pT181 replication.</title>
        <authorList>
            <person name="Iordanescu S."/>
        </authorList>
    </citation>
    <scope>NUCLEOTIDE SEQUENCE [GENOMIC DNA]</scope>
</reference>
<reference key="2">
    <citation type="book" date="2006" name="Gram positive pathogens, 2nd edition">
        <title>The Staphylococcus aureus NCTC 8325 genome.</title>
        <editorList>
            <person name="Fischetti V."/>
            <person name="Novick R."/>
            <person name="Ferretti J."/>
            <person name="Portnoy D."/>
            <person name="Rood J."/>
        </editorList>
        <authorList>
            <person name="Gillaspy A.F."/>
            <person name="Worrell V."/>
            <person name="Orvis J."/>
            <person name="Roe B.A."/>
            <person name="Dyer D.W."/>
            <person name="Iandolo J.J."/>
        </authorList>
    </citation>
    <scope>NUCLEOTIDE SEQUENCE [LARGE SCALE GENOMIC DNA]</scope>
    <source>
        <strain>NCTC 8325 / PS 47</strain>
    </source>
</reference>
<reference key="3">
    <citation type="journal article" date="2011" name="Angew. Chem. Int. Ed. Engl.">
        <title>Functional assignment of an enzyme that catalyzes the synthesis of an archaea-type ether lipid in bacteria.</title>
        <authorList>
            <person name="Guldan H."/>
            <person name="Matysik F.M."/>
            <person name="Bocola M."/>
            <person name="Sterner R."/>
            <person name="Babinger P."/>
        </authorList>
    </citation>
    <scope>FUNCTION</scope>
    <scope>CATALYTIC ACTIVITY</scope>
    <scope>SUBSTRATE SPECIFICITY</scope>
    <scope>SUBUNIT</scope>
</reference>
<reference key="4">
    <citation type="journal article" date="2014" name="Mol. Microbiol.">
        <title>A comprehensive analysis of the geranylgeranylglyceryl phosphate synthase enzyme family identifies novel members and reveals mechanisms of substrate specificity and quaternary structure organization.</title>
        <authorList>
            <person name="Peterhoff D."/>
            <person name="Beer B."/>
            <person name="Rajendran C."/>
            <person name="Kumpula E.P."/>
            <person name="Kapetaniou E."/>
            <person name="Guldan H."/>
            <person name="Wierenga R.K."/>
            <person name="Sterner R."/>
            <person name="Babinger P."/>
        </authorList>
    </citation>
    <scope>FUNCTION</scope>
    <scope>CATALYTIC ACTIVITY</scope>
    <scope>SUBUNIT</scope>
</reference>
<feature type="chain" id="PRO_0000138722" description="Heptaprenylglyceryl phosphate synthase">
    <location>
        <begin position="1"/>
        <end position="230"/>
    </location>
</feature>
<feature type="binding site" evidence="1">
    <location>
        <position position="12"/>
    </location>
    <ligand>
        <name>sn-glycerol 1-phosphate</name>
        <dbReference type="ChEBI" id="CHEBI:57685"/>
    </ligand>
</feature>
<feature type="binding site" evidence="1">
    <location>
        <position position="14"/>
    </location>
    <ligand>
        <name>Mg(2+)</name>
        <dbReference type="ChEBI" id="CHEBI:18420"/>
    </ligand>
</feature>
<feature type="binding site" evidence="1">
    <location>
        <position position="40"/>
    </location>
    <ligand>
        <name>Mg(2+)</name>
        <dbReference type="ChEBI" id="CHEBI:18420"/>
    </ligand>
</feature>
<feature type="binding site" evidence="1">
    <location>
        <begin position="159"/>
        <end position="164"/>
    </location>
    <ligand>
        <name>sn-glycerol 1-phosphate</name>
        <dbReference type="ChEBI" id="CHEBI:57685"/>
    </ligand>
</feature>
<feature type="binding site" evidence="1">
    <location>
        <position position="189"/>
    </location>
    <ligand>
        <name>sn-glycerol 1-phosphate</name>
        <dbReference type="ChEBI" id="CHEBI:57685"/>
    </ligand>
</feature>
<feature type="binding site" evidence="1">
    <location>
        <begin position="209"/>
        <end position="210"/>
    </location>
    <ligand>
        <name>sn-glycerol 1-phosphate</name>
        <dbReference type="ChEBI" id="CHEBI:57685"/>
    </ligand>
</feature>
<feature type="sequence conflict" description="In Ref. 1; AAA72090." evidence="4" ref="1">
    <original>KALKTVKIKESSK</original>
    <variation>SFKNSKNKGV</variation>
    <location>
        <begin position="218"/>
        <end position="230"/>
    </location>
</feature>
<gene>
    <name evidence="1" type="primary">pcrB</name>
    <name type="ordered locus">SAOUHSC_02124</name>
</gene>
<protein>
    <recommendedName>
        <fullName evidence="1">Heptaprenylglyceryl phosphate synthase</fullName>
        <shortName evidence="1">HepGP synthase</shortName>
        <ecNumber evidence="1 2 3">2.5.1.n9</ecNumber>
    </recommendedName>
    <alternativeName>
        <fullName evidence="1">Glycerol-1-phosphate heptaprenyltransferase</fullName>
    </alternativeName>
</protein>
<evidence type="ECO:0000255" key="1">
    <source>
        <dbReference type="HAMAP-Rule" id="MF_00112"/>
    </source>
</evidence>
<evidence type="ECO:0000269" key="2">
    <source>
    </source>
</evidence>
<evidence type="ECO:0000269" key="3">
    <source>
    </source>
</evidence>
<evidence type="ECO:0000305" key="4"/>
<keyword id="KW-0444">Lipid biosynthesis</keyword>
<keyword id="KW-0443">Lipid metabolism</keyword>
<keyword id="KW-0460">Magnesium</keyword>
<keyword id="KW-0479">Metal-binding</keyword>
<keyword id="KW-0594">Phospholipid biosynthesis</keyword>
<keyword id="KW-1208">Phospholipid metabolism</keyword>
<keyword id="KW-1185">Reference proteome</keyword>
<keyword id="KW-0808">Transferase</keyword>
<sequence length="230" mass="25889">MYDIKKWRHIFKLDPAKHISDDDLDAICMSQTDAIMIGGTDDVTEDNVIHLMSRVRRYPLPLVLEISNIESVMPGFDFYFVPTVLNSTDVVFHNGTLLEALKTYGHSIDFEEVIFEGYVVCNADSKVAKHTKANTDLTTEDLEAYAQMVNHMYRLPVMYIEYSGIYGDVSKVQAVSEHLTETQLFYGGGISSEQQATEMAAIADTIIVGDIIYKDIKKALKTVKIKESSK</sequence>
<proteinExistence type="evidence at protein level"/>
<dbReference type="EC" id="2.5.1.n9" evidence="1 2 3"/>
<dbReference type="EMBL" id="M63176">
    <property type="protein sequence ID" value="AAA72090.1"/>
    <property type="molecule type" value="Genomic_DNA"/>
</dbReference>
<dbReference type="EMBL" id="CP000253">
    <property type="protein sequence ID" value="ABD31173.1"/>
    <property type="molecule type" value="Genomic_DNA"/>
</dbReference>
<dbReference type="PIR" id="S39922">
    <property type="entry name" value="S39922"/>
</dbReference>
<dbReference type="RefSeq" id="WP_000272070.1">
    <property type="nucleotide sequence ID" value="NZ_LS483365.1"/>
</dbReference>
<dbReference type="RefSeq" id="YP_500615.1">
    <property type="nucleotide sequence ID" value="NC_007795.1"/>
</dbReference>
<dbReference type="SMR" id="Q53726"/>
<dbReference type="STRING" id="93061.SAOUHSC_02124"/>
<dbReference type="PaxDb" id="1280-SAXN108_2006"/>
<dbReference type="GeneID" id="3921195"/>
<dbReference type="KEGG" id="sao:SAOUHSC_02124"/>
<dbReference type="PATRIC" id="fig|93061.5.peg.1927"/>
<dbReference type="eggNOG" id="COG1646">
    <property type="taxonomic scope" value="Bacteria"/>
</dbReference>
<dbReference type="HOGENOM" id="CLU_095211_0_0_9"/>
<dbReference type="OrthoDB" id="2381757at2"/>
<dbReference type="UniPathway" id="UPA00940"/>
<dbReference type="PRO" id="PR:Q53726"/>
<dbReference type="Proteomes" id="UP000008816">
    <property type="component" value="Chromosome"/>
</dbReference>
<dbReference type="GO" id="GO:0120536">
    <property type="term" value="F:heptaprenylglyceryl phosphate synthase activity"/>
    <property type="evidence" value="ECO:0000316"/>
    <property type="project" value="UniProtKB"/>
</dbReference>
<dbReference type="GO" id="GO:0000287">
    <property type="term" value="F:magnesium ion binding"/>
    <property type="evidence" value="ECO:0007669"/>
    <property type="project" value="UniProtKB-UniRule"/>
</dbReference>
<dbReference type="GO" id="GO:0004659">
    <property type="term" value="F:prenyltransferase activity"/>
    <property type="evidence" value="ECO:0000314"/>
    <property type="project" value="UniProtKB"/>
</dbReference>
<dbReference type="GO" id="GO:0046474">
    <property type="term" value="P:glycerophospholipid biosynthetic process"/>
    <property type="evidence" value="ECO:0000316"/>
    <property type="project" value="UniProtKB"/>
</dbReference>
<dbReference type="CDD" id="cd02812">
    <property type="entry name" value="PcrB_like"/>
    <property type="match status" value="1"/>
</dbReference>
<dbReference type="FunFam" id="3.20.20.390:FF:000001">
    <property type="entry name" value="Heptaprenylglyceryl phosphate synthase"/>
    <property type="match status" value="1"/>
</dbReference>
<dbReference type="Gene3D" id="3.20.20.390">
    <property type="entry name" value="FMN-linked oxidoreductases"/>
    <property type="match status" value="1"/>
</dbReference>
<dbReference type="HAMAP" id="MF_00112">
    <property type="entry name" value="GGGP_HepGP_synthase"/>
    <property type="match status" value="1"/>
</dbReference>
<dbReference type="InterPro" id="IPR039074">
    <property type="entry name" value="GGGP/HepGP_synthase_I"/>
</dbReference>
<dbReference type="InterPro" id="IPR038597">
    <property type="entry name" value="GGGP/HepGP_synthase_sf"/>
</dbReference>
<dbReference type="InterPro" id="IPR008205">
    <property type="entry name" value="GGGP_HepGP_synthase"/>
</dbReference>
<dbReference type="NCBIfam" id="TIGR01768">
    <property type="entry name" value="GGGP-family"/>
    <property type="match status" value="1"/>
</dbReference>
<dbReference type="NCBIfam" id="NF003197">
    <property type="entry name" value="PRK04169.1-1"/>
    <property type="match status" value="1"/>
</dbReference>
<dbReference type="NCBIfam" id="NF003199">
    <property type="entry name" value="PRK04169.1-3"/>
    <property type="match status" value="1"/>
</dbReference>
<dbReference type="NCBIfam" id="NF003200">
    <property type="entry name" value="PRK04169.1-4"/>
    <property type="match status" value="1"/>
</dbReference>
<dbReference type="PANTHER" id="PTHR40029">
    <property type="match status" value="1"/>
</dbReference>
<dbReference type="PANTHER" id="PTHR40029:SF2">
    <property type="entry name" value="HEPTAPRENYLGLYCERYL PHOSPHATE SYNTHASE"/>
    <property type="match status" value="1"/>
</dbReference>
<dbReference type="Pfam" id="PF01884">
    <property type="entry name" value="PcrB"/>
    <property type="match status" value="1"/>
</dbReference>
<dbReference type="SUPFAM" id="SSF51395">
    <property type="entry name" value="FMN-linked oxidoreductases"/>
    <property type="match status" value="1"/>
</dbReference>
<accession>Q53726</accession>
<accession>Q2G1X8</accession>
<comment type="function">
    <text evidence="2 3">Prenyltransferase that catalyzes in vivo the transfer of the heptaprenyl moiety of heptaprenyl pyrophosphate (HepPP; 35 carbon atoms) to the C3 hydroxyl of sn-glycerol-1-phosphate (G1P), producing heptaprenylglyceryl phosphate (HepGP). This reaction is an ether-bond-formation step in the biosynthesis of archaea-type G1P-based membrane lipids found in Bacillales. To a much lesser extent, is also able to use geranylgeranyl diphosphate (GGPP; C20) as the prenyl donor.</text>
</comment>
<comment type="catalytic activity">
    <reaction evidence="1 2 3">
        <text>sn-glycerol 1-phosphate + all-trans-heptaprenyl diphosphate = 3-heptaprenyl-sn-glycero-1-phosphate + diphosphate</text>
        <dbReference type="Rhea" id="RHEA:33495"/>
        <dbReference type="ChEBI" id="CHEBI:33019"/>
        <dbReference type="ChEBI" id="CHEBI:57685"/>
        <dbReference type="ChEBI" id="CHEBI:58206"/>
        <dbReference type="ChEBI" id="CHEBI:64781"/>
        <dbReference type="EC" id="2.5.1.n9"/>
    </reaction>
</comment>
<comment type="cofactor">
    <cofactor evidence="1">
        <name>Mg(2+)</name>
        <dbReference type="ChEBI" id="CHEBI:18420"/>
    </cofactor>
</comment>
<comment type="pathway">
    <text evidence="1">Membrane lipid metabolism; glycerophospholipid metabolism.</text>
</comment>
<comment type="subunit">
    <text evidence="1 2 3">Homodimer.</text>
</comment>
<comment type="similarity">
    <text evidence="1">Belongs to the GGGP/HepGP synthase family. Group I subfamily.</text>
</comment>
<organism>
    <name type="scientific">Staphylococcus aureus (strain NCTC 8325 / PS 47)</name>
    <dbReference type="NCBI Taxonomy" id="93061"/>
    <lineage>
        <taxon>Bacteria</taxon>
        <taxon>Bacillati</taxon>
        <taxon>Bacillota</taxon>
        <taxon>Bacilli</taxon>
        <taxon>Bacillales</taxon>
        <taxon>Staphylococcaceae</taxon>
        <taxon>Staphylococcus</taxon>
    </lineage>
</organism>
<name>PCRB_STAA8</name>